<sequence>MYSGQNKIHKDKGVAPTEFEEQVTQALFDLENTNQELKSELKDLYINQAVQMDISGNRKAVVIYVPFRLRKAFRKIHLRLVRELEKKFSGKDVIFVATRRIMRPPKKGSAVQRPRNRTLTSVHEAMLEDVAYPAEIVGKRTRYRLDGTKIMKVFLDSKLKNDTEYKLETMVGVYRKLTGKDVVFEYPVIEA</sequence>
<reference key="1">
    <citation type="journal article" date="2000" name="Nature">
        <title>Sequence and analysis of chromosome 3 of the plant Arabidopsis thaliana.</title>
        <authorList>
            <person name="Salanoubat M."/>
            <person name="Lemcke K."/>
            <person name="Rieger M."/>
            <person name="Ansorge W."/>
            <person name="Unseld M."/>
            <person name="Fartmann B."/>
            <person name="Valle G."/>
            <person name="Bloecker H."/>
            <person name="Perez-Alonso M."/>
            <person name="Obermaier B."/>
            <person name="Delseny M."/>
            <person name="Boutry M."/>
            <person name="Grivell L.A."/>
            <person name="Mache R."/>
            <person name="Puigdomenech P."/>
            <person name="De Simone V."/>
            <person name="Choisne N."/>
            <person name="Artiguenave F."/>
            <person name="Robert C."/>
            <person name="Brottier P."/>
            <person name="Wincker P."/>
            <person name="Cattolico L."/>
            <person name="Weissenbach J."/>
            <person name="Saurin W."/>
            <person name="Quetier F."/>
            <person name="Schaefer M."/>
            <person name="Mueller-Auer S."/>
            <person name="Gabel C."/>
            <person name="Fuchs M."/>
            <person name="Benes V."/>
            <person name="Wurmbach E."/>
            <person name="Drzonek H."/>
            <person name="Erfle H."/>
            <person name="Jordan N."/>
            <person name="Bangert S."/>
            <person name="Wiedelmann R."/>
            <person name="Kranz H."/>
            <person name="Voss H."/>
            <person name="Holland R."/>
            <person name="Brandt P."/>
            <person name="Nyakatura G."/>
            <person name="Vezzi A."/>
            <person name="D'Angelo M."/>
            <person name="Pallavicini A."/>
            <person name="Toppo S."/>
            <person name="Simionati B."/>
            <person name="Conrad A."/>
            <person name="Hornischer K."/>
            <person name="Kauer G."/>
            <person name="Loehnert T.-H."/>
            <person name="Nordsiek G."/>
            <person name="Reichelt J."/>
            <person name="Scharfe M."/>
            <person name="Schoen O."/>
            <person name="Bargues M."/>
            <person name="Terol J."/>
            <person name="Climent J."/>
            <person name="Navarro P."/>
            <person name="Collado C."/>
            <person name="Perez-Perez A."/>
            <person name="Ottenwaelder B."/>
            <person name="Duchemin D."/>
            <person name="Cooke R."/>
            <person name="Laudie M."/>
            <person name="Berger-Llauro C."/>
            <person name="Purnelle B."/>
            <person name="Masuy D."/>
            <person name="de Haan M."/>
            <person name="Maarse A.C."/>
            <person name="Alcaraz J.-P."/>
            <person name="Cottet A."/>
            <person name="Casacuberta E."/>
            <person name="Monfort A."/>
            <person name="Argiriou A."/>
            <person name="Flores M."/>
            <person name="Liguori R."/>
            <person name="Vitale D."/>
            <person name="Mannhaupt G."/>
            <person name="Haase D."/>
            <person name="Schoof H."/>
            <person name="Rudd S."/>
            <person name="Zaccaria P."/>
            <person name="Mewes H.-W."/>
            <person name="Mayer K.F.X."/>
            <person name="Kaul S."/>
            <person name="Town C.D."/>
            <person name="Koo H.L."/>
            <person name="Tallon L.J."/>
            <person name="Jenkins J."/>
            <person name="Rooney T."/>
            <person name="Rizzo M."/>
            <person name="Walts A."/>
            <person name="Utterback T."/>
            <person name="Fujii C.Y."/>
            <person name="Shea T.P."/>
            <person name="Creasy T.H."/>
            <person name="Haas B."/>
            <person name="Maiti R."/>
            <person name="Wu D."/>
            <person name="Peterson J."/>
            <person name="Van Aken S."/>
            <person name="Pai G."/>
            <person name="Militscher J."/>
            <person name="Sellers P."/>
            <person name="Gill J.E."/>
            <person name="Feldblyum T.V."/>
            <person name="Preuss D."/>
            <person name="Lin X."/>
            <person name="Nierman W.C."/>
            <person name="Salzberg S.L."/>
            <person name="White O."/>
            <person name="Venter J.C."/>
            <person name="Fraser C.M."/>
            <person name="Kaneko T."/>
            <person name="Nakamura Y."/>
            <person name="Sato S."/>
            <person name="Kato T."/>
            <person name="Asamizu E."/>
            <person name="Sasamoto S."/>
            <person name="Kimura T."/>
            <person name="Idesawa K."/>
            <person name="Kawashima K."/>
            <person name="Kishida Y."/>
            <person name="Kiyokawa C."/>
            <person name="Kohara M."/>
            <person name="Matsumoto M."/>
            <person name="Matsuno A."/>
            <person name="Muraki A."/>
            <person name="Nakayama S."/>
            <person name="Nakazaki N."/>
            <person name="Shinpo S."/>
            <person name="Takeuchi C."/>
            <person name="Wada T."/>
            <person name="Watanabe A."/>
            <person name="Yamada M."/>
            <person name="Yasuda M."/>
            <person name="Tabata S."/>
        </authorList>
    </citation>
    <scope>NUCLEOTIDE SEQUENCE [LARGE SCALE GENOMIC DNA]</scope>
    <source>
        <strain>cv. Columbia</strain>
    </source>
</reference>
<reference key="2">
    <citation type="journal article" date="2017" name="Plant J.">
        <title>Araport11: a complete reannotation of the Arabidopsis thaliana reference genome.</title>
        <authorList>
            <person name="Cheng C.Y."/>
            <person name="Krishnakumar V."/>
            <person name="Chan A.P."/>
            <person name="Thibaud-Nissen F."/>
            <person name="Schobel S."/>
            <person name="Town C.D."/>
        </authorList>
    </citation>
    <scope>GENOME REANNOTATION</scope>
    <source>
        <strain>cv. Columbia</strain>
    </source>
</reference>
<reference key="3">
    <citation type="journal article" date="2003" name="Science">
        <title>Empirical analysis of transcriptional activity in the Arabidopsis genome.</title>
        <authorList>
            <person name="Yamada K."/>
            <person name="Lim J."/>
            <person name="Dale J.M."/>
            <person name="Chen H."/>
            <person name="Shinn P."/>
            <person name="Palm C.J."/>
            <person name="Southwick A.M."/>
            <person name="Wu H.C."/>
            <person name="Kim C.J."/>
            <person name="Nguyen M."/>
            <person name="Pham P.K."/>
            <person name="Cheuk R.F."/>
            <person name="Karlin-Newmann G."/>
            <person name="Liu S.X."/>
            <person name="Lam B."/>
            <person name="Sakano H."/>
            <person name="Wu T."/>
            <person name="Yu G."/>
            <person name="Miranda M."/>
            <person name="Quach H.L."/>
            <person name="Tripp M."/>
            <person name="Chang C.H."/>
            <person name="Lee J.M."/>
            <person name="Toriumi M.J."/>
            <person name="Chan M.M."/>
            <person name="Tang C.C."/>
            <person name="Onodera C.S."/>
            <person name="Deng J.M."/>
            <person name="Akiyama K."/>
            <person name="Ansari Y."/>
            <person name="Arakawa T."/>
            <person name="Banh J."/>
            <person name="Banno F."/>
            <person name="Bowser L."/>
            <person name="Brooks S.Y."/>
            <person name="Carninci P."/>
            <person name="Chao Q."/>
            <person name="Choy N."/>
            <person name="Enju A."/>
            <person name="Goldsmith A.D."/>
            <person name="Gurjal M."/>
            <person name="Hansen N.F."/>
            <person name="Hayashizaki Y."/>
            <person name="Johnson-Hopson C."/>
            <person name="Hsuan V.W."/>
            <person name="Iida K."/>
            <person name="Karnes M."/>
            <person name="Khan S."/>
            <person name="Koesema E."/>
            <person name="Ishida J."/>
            <person name="Jiang P.X."/>
            <person name="Jones T."/>
            <person name="Kawai J."/>
            <person name="Kamiya A."/>
            <person name="Meyers C."/>
            <person name="Nakajima M."/>
            <person name="Narusaka M."/>
            <person name="Seki M."/>
            <person name="Sakurai T."/>
            <person name="Satou M."/>
            <person name="Tamse R."/>
            <person name="Vaysberg M."/>
            <person name="Wallender E.K."/>
            <person name="Wong C."/>
            <person name="Yamamura Y."/>
            <person name="Yuan S."/>
            <person name="Shinozaki K."/>
            <person name="Davis R.W."/>
            <person name="Theologis A."/>
            <person name="Ecker J.R."/>
        </authorList>
    </citation>
    <scope>NUCLEOTIDE SEQUENCE [LARGE SCALE MRNA]</scope>
    <source>
        <strain>cv. Columbia</strain>
    </source>
</reference>
<reference key="4">
    <citation type="submission" date="2002-03" db="EMBL/GenBank/DDBJ databases">
        <title>Full-length cDNA from Arabidopsis thaliana.</title>
        <authorList>
            <person name="Brover V.V."/>
            <person name="Troukhan M.E."/>
            <person name="Alexandrov N.A."/>
            <person name="Lu Y.-P."/>
            <person name="Flavell R.B."/>
            <person name="Feldmann K.A."/>
        </authorList>
    </citation>
    <scope>NUCLEOTIDE SEQUENCE [LARGE SCALE MRNA]</scope>
</reference>
<reference key="5">
    <citation type="journal article" date="2001" name="Plant Physiol.">
        <title>The organization of cytoplasmic ribosomal protein genes in the Arabidopsis genome.</title>
        <authorList>
            <person name="Barakat A."/>
            <person name="Szick-Miranda K."/>
            <person name="Chang I.-F."/>
            <person name="Guyot R."/>
            <person name="Blanc G."/>
            <person name="Cooke R."/>
            <person name="Delseny M."/>
            <person name="Bailey-Serres J."/>
        </authorList>
    </citation>
    <scope>GENE FAMILY ORGANIZATION</scope>
    <scope>NOMENCLATURE</scope>
</reference>
<reference key="6">
    <citation type="journal article" date="2023" name="Plant Cell">
        <title>An updated nomenclature for plant ribosomal protein genes.</title>
        <authorList>
            <person name="Scarpin M.R."/>
            <person name="Busche M."/>
            <person name="Martinez R.E."/>
            <person name="Harper L.C."/>
            <person name="Reiser L."/>
            <person name="Szakonyi D."/>
            <person name="Merchante C."/>
            <person name="Lan T."/>
            <person name="Xiong W."/>
            <person name="Mo B."/>
            <person name="Tang G."/>
            <person name="Chen X."/>
            <person name="Bailey-Serres J."/>
            <person name="Browning K.S."/>
            <person name="Brunkard J.O."/>
        </authorList>
    </citation>
    <scope>NOMENCLATURE</scope>
</reference>
<evidence type="ECO:0000250" key="1">
    <source>
        <dbReference type="UniProtKB" id="Q8LD03"/>
    </source>
</evidence>
<evidence type="ECO:0000255" key="2"/>
<evidence type="ECO:0000303" key="3">
    <source>
    </source>
</evidence>
<evidence type="ECO:0000305" key="4"/>
<name>RS72_ARATH</name>
<keyword id="KW-0007">Acetylation</keyword>
<keyword id="KW-0175">Coiled coil</keyword>
<keyword id="KW-1185">Reference proteome</keyword>
<keyword id="KW-0687">Ribonucleoprotein</keyword>
<keyword id="KW-0689">Ribosomal protein</keyword>
<proteinExistence type="evidence at transcript level"/>
<organism>
    <name type="scientific">Arabidopsis thaliana</name>
    <name type="common">Mouse-ear cress</name>
    <dbReference type="NCBI Taxonomy" id="3702"/>
    <lineage>
        <taxon>Eukaryota</taxon>
        <taxon>Viridiplantae</taxon>
        <taxon>Streptophyta</taxon>
        <taxon>Embryophyta</taxon>
        <taxon>Tracheophyta</taxon>
        <taxon>Spermatophyta</taxon>
        <taxon>Magnoliopsida</taxon>
        <taxon>eudicotyledons</taxon>
        <taxon>Gunneridae</taxon>
        <taxon>Pentapetalae</taxon>
        <taxon>rosids</taxon>
        <taxon>malvids</taxon>
        <taxon>Brassicales</taxon>
        <taxon>Brassicaceae</taxon>
        <taxon>Camelineae</taxon>
        <taxon>Arabidopsis</taxon>
    </lineage>
</organism>
<gene>
    <name type="primary">RPS7B</name>
    <name type="ordered locus">At3g02560</name>
    <name type="ORF">F16B3.19</name>
</gene>
<comment type="similarity">
    <text evidence="4">Belongs to the eukaryotic ribosomal protein eS7 family.</text>
</comment>
<feature type="chain" id="PRO_0000250184" description="Small ribosomal subunit protein eS7y">
    <location>
        <begin position="1"/>
        <end position="191"/>
    </location>
</feature>
<feature type="coiled-coil region" evidence="2">
    <location>
        <begin position="17"/>
        <end position="50"/>
    </location>
</feature>
<feature type="modified residue" description="N-acetylmethionine" evidence="1">
    <location>
        <position position="1"/>
    </location>
</feature>
<dbReference type="EMBL" id="AC021640">
    <property type="protein sequence ID" value="AAF32463.1"/>
    <property type="molecule type" value="Genomic_DNA"/>
</dbReference>
<dbReference type="EMBL" id="CP002686">
    <property type="protein sequence ID" value="AEE73829.1"/>
    <property type="molecule type" value="Genomic_DNA"/>
</dbReference>
<dbReference type="EMBL" id="CP002686">
    <property type="protein sequence ID" value="AEE73830.1"/>
    <property type="molecule type" value="Genomic_DNA"/>
</dbReference>
<dbReference type="EMBL" id="CP002686">
    <property type="protein sequence ID" value="ANM65801.1"/>
    <property type="molecule type" value="Genomic_DNA"/>
</dbReference>
<dbReference type="EMBL" id="AF412046">
    <property type="protein sequence ID" value="AAL06499.1"/>
    <property type="molecule type" value="mRNA"/>
</dbReference>
<dbReference type="EMBL" id="AF428416">
    <property type="protein sequence ID" value="AAL16184.1"/>
    <property type="molecule type" value="mRNA"/>
</dbReference>
<dbReference type="EMBL" id="AY062673">
    <property type="protein sequence ID" value="AAL32751.1"/>
    <property type="molecule type" value="mRNA"/>
</dbReference>
<dbReference type="EMBL" id="AY072616">
    <property type="protein sequence ID" value="AAL62007.1"/>
    <property type="molecule type" value="mRNA"/>
</dbReference>
<dbReference type="EMBL" id="BT001226">
    <property type="protein sequence ID" value="AAN65113.1"/>
    <property type="molecule type" value="mRNA"/>
</dbReference>
<dbReference type="EMBL" id="AY087001">
    <property type="protein sequence ID" value="AAM64562.1"/>
    <property type="molecule type" value="mRNA"/>
</dbReference>
<dbReference type="RefSeq" id="NP_001319452.1">
    <property type="nucleotide sequence ID" value="NM_001337417.1"/>
</dbReference>
<dbReference type="RefSeq" id="NP_186905.1">
    <property type="nucleotide sequence ID" value="NM_111124.4"/>
</dbReference>
<dbReference type="RefSeq" id="NP_850504.1">
    <property type="nucleotide sequence ID" value="NM_180173.2"/>
</dbReference>
<dbReference type="SMR" id="Q9M885"/>
<dbReference type="BioGRID" id="6641">
    <property type="interactions" value="2"/>
</dbReference>
<dbReference type="FunCoup" id="Q9M885">
    <property type="interactions" value="4107"/>
</dbReference>
<dbReference type="STRING" id="3702.Q9M885"/>
<dbReference type="PaxDb" id="3702-AT3G02560.2"/>
<dbReference type="ProteomicsDB" id="228026"/>
<dbReference type="EnsemblPlants" id="AT3G02560.1">
    <property type="protein sequence ID" value="AT3G02560.1"/>
    <property type="gene ID" value="AT3G02560"/>
</dbReference>
<dbReference type="EnsemblPlants" id="AT3G02560.2">
    <property type="protein sequence ID" value="AT3G02560.2"/>
    <property type="gene ID" value="AT3G02560"/>
</dbReference>
<dbReference type="EnsemblPlants" id="AT3G02560.3">
    <property type="protein sequence ID" value="AT3G02560.3"/>
    <property type="gene ID" value="AT3G02560"/>
</dbReference>
<dbReference type="GeneID" id="821308"/>
<dbReference type="Gramene" id="AT3G02560.1">
    <property type="protein sequence ID" value="AT3G02560.1"/>
    <property type="gene ID" value="AT3G02560"/>
</dbReference>
<dbReference type="Gramene" id="AT3G02560.2">
    <property type="protein sequence ID" value="AT3G02560.2"/>
    <property type="gene ID" value="AT3G02560"/>
</dbReference>
<dbReference type="Gramene" id="AT3G02560.3">
    <property type="protein sequence ID" value="AT3G02560.3"/>
    <property type="gene ID" value="AT3G02560"/>
</dbReference>
<dbReference type="KEGG" id="ath:AT3G02560"/>
<dbReference type="Araport" id="AT3G02560"/>
<dbReference type="TAIR" id="AT3G02560"/>
<dbReference type="eggNOG" id="KOG3320">
    <property type="taxonomic scope" value="Eukaryota"/>
</dbReference>
<dbReference type="HOGENOM" id="CLU_088621_1_2_1"/>
<dbReference type="InParanoid" id="Q9M885"/>
<dbReference type="OMA" id="SGQNKIH"/>
<dbReference type="OrthoDB" id="1724687at2759"/>
<dbReference type="PhylomeDB" id="Q9M885"/>
<dbReference type="CD-CODE" id="4299E36E">
    <property type="entry name" value="Nucleolus"/>
</dbReference>
<dbReference type="PRO" id="PR:Q9M885"/>
<dbReference type="Proteomes" id="UP000006548">
    <property type="component" value="Chromosome 3"/>
</dbReference>
<dbReference type="ExpressionAtlas" id="Q9M885">
    <property type="expression patterns" value="baseline and differential"/>
</dbReference>
<dbReference type="GO" id="GO:0009507">
    <property type="term" value="C:chloroplast"/>
    <property type="evidence" value="ECO:0007005"/>
    <property type="project" value="TAIR"/>
</dbReference>
<dbReference type="GO" id="GO:0005829">
    <property type="term" value="C:cytosol"/>
    <property type="evidence" value="ECO:0007005"/>
    <property type="project" value="TAIR"/>
</dbReference>
<dbReference type="GO" id="GO:0022626">
    <property type="term" value="C:cytosolic ribosome"/>
    <property type="evidence" value="ECO:0007005"/>
    <property type="project" value="TAIR"/>
</dbReference>
<dbReference type="GO" id="GO:0022627">
    <property type="term" value="C:cytosolic small ribosomal subunit"/>
    <property type="evidence" value="ECO:0007005"/>
    <property type="project" value="TAIR"/>
</dbReference>
<dbReference type="GO" id="GO:0003729">
    <property type="term" value="F:mRNA binding"/>
    <property type="evidence" value="ECO:0000314"/>
    <property type="project" value="TAIR"/>
</dbReference>
<dbReference type="GO" id="GO:0003735">
    <property type="term" value="F:structural constituent of ribosome"/>
    <property type="evidence" value="ECO:0000314"/>
    <property type="project" value="CAFA"/>
</dbReference>
<dbReference type="GO" id="GO:0006412">
    <property type="term" value="P:translation"/>
    <property type="evidence" value="ECO:0007669"/>
    <property type="project" value="InterPro"/>
</dbReference>
<dbReference type="InterPro" id="IPR000554">
    <property type="entry name" value="Ribosomal_eS7"/>
</dbReference>
<dbReference type="InterPro" id="IPR047861">
    <property type="entry name" value="Ribosomal_eS7_CS"/>
</dbReference>
<dbReference type="PANTHER" id="PTHR11278">
    <property type="entry name" value="40S RIBOSOMAL PROTEIN S7"/>
    <property type="match status" value="1"/>
</dbReference>
<dbReference type="PANTHER" id="PTHR11278:SF0">
    <property type="entry name" value="SMALL RIBOSOMAL SUBUNIT PROTEIN ES7"/>
    <property type="match status" value="1"/>
</dbReference>
<dbReference type="Pfam" id="PF01251">
    <property type="entry name" value="Ribosomal_S7e"/>
    <property type="match status" value="1"/>
</dbReference>
<dbReference type="PROSITE" id="PS00948">
    <property type="entry name" value="RIBOSOMAL_S7E"/>
    <property type="match status" value="1"/>
</dbReference>
<accession>Q9M885</accession>
<protein>
    <recommendedName>
        <fullName evidence="3">Small ribosomal subunit protein eS7y</fullName>
    </recommendedName>
    <alternativeName>
        <fullName>40S ribosomal protein S7-2</fullName>
    </alternativeName>
</protein>